<reference key="1">
    <citation type="journal article" date="2005" name="Nucleic Acids Res.">
        <title>Genome dynamics and diversity of Shigella species, the etiologic agents of bacillary dysentery.</title>
        <authorList>
            <person name="Yang F."/>
            <person name="Yang J."/>
            <person name="Zhang X."/>
            <person name="Chen L."/>
            <person name="Jiang Y."/>
            <person name="Yan Y."/>
            <person name="Tang X."/>
            <person name="Wang J."/>
            <person name="Xiong Z."/>
            <person name="Dong J."/>
            <person name="Xue Y."/>
            <person name="Zhu Y."/>
            <person name="Xu X."/>
            <person name="Sun L."/>
            <person name="Chen S."/>
            <person name="Nie H."/>
            <person name="Peng J."/>
            <person name="Xu J."/>
            <person name="Wang Y."/>
            <person name="Yuan Z."/>
            <person name="Wen Y."/>
            <person name="Yao Z."/>
            <person name="Shen Y."/>
            <person name="Qiang B."/>
            <person name="Hou Y."/>
            <person name="Yu J."/>
            <person name="Jin Q."/>
        </authorList>
    </citation>
    <scope>NUCLEOTIDE SEQUENCE [LARGE SCALE GENOMIC DNA]</scope>
    <source>
        <strain>Sb227</strain>
    </source>
</reference>
<sequence>MKTVTVKDLVIGTGAPKIIVSLMAKDIARVKSEALAYREADFDILEWRVDHFADLSNVESVMAAAKILRETMPEKPLLFTFRSAKEGGEQAISTEAYIALNRAAIDSGLVDMIDLELFTGDDQVKETVACAHAHDVKVVMSNHDFHKTPEAEEIIARLRKMQSFDADIPKIALMPQSTSDVLTLLAATLEMQEQYADRPIITMSMAKTGVISRLAGEVFGSAATFGAVKKASAPGQISVNDLRTVLTILHQA</sequence>
<name>AROD_SHIBS</name>
<gene>
    <name evidence="1" type="primary">aroD</name>
    <name type="ordered locus">SBO_1438</name>
</gene>
<evidence type="ECO:0000255" key="1">
    <source>
        <dbReference type="HAMAP-Rule" id="MF_00214"/>
    </source>
</evidence>
<keyword id="KW-0028">Amino-acid biosynthesis</keyword>
<keyword id="KW-0057">Aromatic amino acid biosynthesis</keyword>
<keyword id="KW-0456">Lyase</keyword>
<keyword id="KW-0704">Schiff base</keyword>
<accession>Q321F0</accession>
<dbReference type="EC" id="4.2.1.10" evidence="1"/>
<dbReference type="EMBL" id="CP000036">
    <property type="protein sequence ID" value="ABB66058.1"/>
    <property type="molecule type" value="Genomic_DNA"/>
</dbReference>
<dbReference type="RefSeq" id="WP_000860174.1">
    <property type="nucleotide sequence ID" value="NC_007613.1"/>
</dbReference>
<dbReference type="SMR" id="Q321F0"/>
<dbReference type="KEGG" id="sbo:SBO_1438"/>
<dbReference type="HOGENOM" id="CLU_064444_0_0_6"/>
<dbReference type="UniPathway" id="UPA00053">
    <property type="reaction ID" value="UER00086"/>
</dbReference>
<dbReference type="Proteomes" id="UP000007067">
    <property type="component" value="Chromosome"/>
</dbReference>
<dbReference type="GO" id="GO:0003855">
    <property type="term" value="F:3-dehydroquinate dehydratase activity"/>
    <property type="evidence" value="ECO:0007669"/>
    <property type="project" value="UniProtKB-UniRule"/>
</dbReference>
<dbReference type="GO" id="GO:0046279">
    <property type="term" value="P:3,4-dihydroxybenzoate biosynthetic process"/>
    <property type="evidence" value="ECO:0007669"/>
    <property type="project" value="UniProtKB-ARBA"/>
</dbReference>
<dbReference type="GO" id="GO:0008652">
    <property type="term" value="P:amino acid biosynthetic process"/>
    <property type="evidence" value="ECO:0007669"/>
    <property type="project" value="UniProtKB-KW"/>
</dbReference>
<dbReference type="GO" id="GO:0009073">
    <property type="term" value="P:aromatic amino acid family biosynthetic process"/>
    <property type="evidence" value="ECO:0007669"/>
    <property type="project" value="UniProtKB-KW"/>
</dbReference>
<dbReference type="GO" id="GO:0009423">
    <property type="term" value="P:chorismate biosynthetic process"/>
    <property type="evidence" value="ECO:0007669"/>
    <property type="project" value="UniProtKB-UniRule"/>
</dbReference>
<dbReference type="CDD" id="cd00502">
    <property type="entry name" value="DHQase_I"/>
    <property type="match status" value="1"/>
</dbReference>
<dbReference type="FunFam" id="3.20.20.70:FF:000047">
    <property type="entry name" value="3-dehydroquinate dehydratase"/>
    <property type="match status" value="1"/>
</dbReference>
<dbReference type="Gene3D" id="3.20.20.70">
    <property type="entry name" value="Aldolase class I"/>
    <property type="match status" value="1"/>
</dbReference>
<dbReference type="HAMAP" id="MF_00214">
    <property type="entry name" value="AroD"/>
    <property type="match status" value="1"/>
</dbReference>
<dbReference type="InterPro" id="IPR018508">
    <property type="entry name" value="3-dehydroquinate_DH_AS"/>
</dbReference>
<dbReference type="InterPro" id="IPR013785">
    <property type="entry name" value="Aldolase_TIM"/>
</dbReference>
<dbReference type="InterPro" id="IPR001381">
    <property type="entry name" value="DHquinase_I"/>
</dbReference>
<dbReference type="InterPro" id="IPR050146">
    <property type="entry name" value="Type-I_3-dehydroquinase"/>
</dbReference>
<dbReference type="NCBIfam" id="TIGR01093">
    <property type="entry name" value="aroD"/>
    <property type="match status" value="1"/>
</dbReference>
<dbReference type="PANTHER" id="PTHR43699">
    <property type="entry name" value="3-DEHYDROQUINATE DEHYDRATASE"/>
    <property type="match status" value="1"/>
</dbReference>
<dbReference type="PANTHER" id="PTHR43699:SF1">
    <property type="entry name" value="3-DEHYDROQUINATE DEHYDRATASE"/>
    <property type="match status" value="1"/>
</dbReference>
<dbReference type="Pfam" id="PF01487">
    <property type="entry name" value="DHquinase_I"/>
    <property type="match status" value="1"/>
</dbReference>
<dbReference type="SUPFAM" id="SSF51569">
    <property type="entry name" value="Aldolase"/>
    <property type="match status" value="1"/>
</dbReference>
<dbReference type="PROSITE" id="PS01028">
    <property type="entry name" value="DEHYDROQUINASE_I"/>
    <property type="match status" value="1"/>
</dbReference>
<proteinExistence type="inferred from homology"/>
<organism>
    <name type="scientific">Shigella boydii serotype 4 (strain Sb227)</name>
    <dbReference type="NCBI Taxonomy" id="300268"/>
    <lineage>
        <taxon>Bacteria</taxon>
        <taxon>Pseudomonadati</taxon>
        <taxon>Pseudomonadota</taxon>
        <taxon>Gammaproteobacteria</taxon>
        <taxon>Enterobacterales</taxon>
        <taxon>Enterobacteriaceae</taxon>
        <taxon>Shigella</taxon>
    </lineage>
</organism>
<feature type="chain" id="PRO_1000043180" description="3-dehydroquinate dehydratase">
    <location>
        <begin position="1"/>
        <end position="252"/>
    </location>
</feature>
<feature type="active site" description="Proton donor/acceptor" evidence="1">
    <location>
        <position position="143"/>
    </location>
</feature>
<feature type="active site" description="Schiff-base intermediate with substrate" evidence="1">
    <location>
        <position position="170"/>
    </location>
</feature>
<feature type="binding site" evidence="1">
    <location>
        <position position="21"/>
    </location>
    <ligand>
        <name>3-dehydroquinate</name>
        <dbReference type="ChEBI" id="CHEBI:32364"/>
    </ligand>
</feature>
<feature type="binding site" evidence="1">
    <location>
        <begin position="46"/>
        <end position="48"/>
    </location>
    <ligand>
        <name>3-dehydroquinate</name>
        <dbReference type="ChEBI" id="CHEBI:32364"/>
    </ligand>
</feature>
<feature type="binding site" evidence="1">
    <location>
        <position position="82"/>
    </location>
    <ligand>
        <name>3-dehydroquinate</name>
        <dbReference type="ChEBI" id="CHEBI:32364"/>
    </ligand>
</feature>
<feature type="binding site" evidence="1">
    <location>
        <position position="213"/>
    </location>
    <ligand>
        <name>3-dehydroquinate</name>
        <dbReference type="ChEBI" id="CHEBI:32364"/>
    </ligand>
</feature>
<feature type="binding site" evidence="1">
    <location>
        <position position="232"/>
    </location>
    <ligand>
        <name>3-dehydroquinate</name>
        <dbReference type="ChEBI" id="CHEBI:32364"/>
    </ligand>
</feature>
<feature type="binding site" evidence="1">
    <location>
        <position position="236"/>
    </location>
    <ligand>
        <name>3-dehydroquinate</name>
        <dbReference type="ChEBI" id="CHEBI:32364"/>
    </ligand>
</feature>
<comment type="function">
    <text evidence="1">Involved in the third step of the chorismate pathway, which leads to the biosynthesis of aromatic amino acids. Catalyzes the cis-dehydration of 3-dehydroquinate (DHQ) and introduces the first double bond of the aromatic ring to yield 3-dehydroshikimate.</text>
</comment>
<comment type="catalytic activity">
    <reaction evidence="1">
        <text>3-dehydroquinate = 3-dehydroshikimate + H2O</text>
        <dbReference type="Rhea" id="RHEA:21096"/>
        <dbReference type="ChEBI" id="CHEBI:15377"/>
        <dbReference type="ChEBI" id="CHEBI:16630"/>
        <dbReference type="ChEBI" id="CHEBI:32364"/>
        <dbReference type="EC" id="4.2.1.10"/>
    </reaction>
</comment>
<comment type="pathway">
    <text evidence="1">Metabolic intermediate biosynthesis; chorismate biosynthesis; chorismate from D-erythrose 4-phosphate and phosphoenolpyruvate: step 3/7.</text>
</comment>
<comment type="subunit">
    <text evidence="1">Homodimer.</text>
</comment>
<comment type="similarity">
    <text evidence="1">Belongs to the type-I 3-dehydroquinase family.</text>
</comment>
<protein>
    <recommendedName>
        <fullName evidence="1">3-dehydroquinate dehydratase</fullName>
        <shortName evidence="1">3-dehydroquinase</shortName>
        <ecNumber evidence="1">4.2.1.10</ecNumber>
    </recommendedName>
    <alternativeName>
        <fullName evidence="1">Type I DHQase</fullName>
    </alternativeName>
    <alternativeName>
        <fullName evidence="1">Type I dehydroquinase</fullName>
        <shortName evidence="1">DHQ1</shortName>
    </alternativeName>
</protein>